<gene>
    <name evidence="1" type="primary">hisF</name>
    <name type="ordered locus">Moth_2031</name>
</gene>
<accession>Q2RGW2</accession>
<evidence type="ECO:0000255" key="1">
    <source>
        <dbReference type="HAMAP-Rule" id="MF_01013"/>
    </source>
</evidence>
<protein>
    <recommendedName>
        <fullName evidence="1">Imidazole glycerol phosphate synthase subunit HisF</fullName>
        <ecNumber evidence="1">4.3.2.10</ecNumber>
    </recommendedName>
    <alternativeName>
        <fullName evidence="1">IGP synthase cyclase subunit</fullName>
    </alternativeName>
    <alternativeName>
        <fullName evidence="1">IGP synthase subunit HisF</fullName>
    </alternativeName>
    <alternativeName>
        <fullName evidence="1">ImGP synthase subunit HisF</fullName>
        <shortName evidence="1">IGPS subunit HisF</shortName>
    </alternativeName>
</protein>
<sequence length="252" mass="26838">MLTKRIIPCLDVDHGRVVKGTNFLNLRDAGDPVELAAAYDREGADELVFLDISASVEGRDIMIDVARRTAAQVFIPFTVGGGLRSLEDIRAMLAAGADKISLNTAAVLDPDLVATAARRFGSQCVVVAIDARRTGPGRWEVYTHGGRRPTGRDAVAWARQVEELGAGEILLTSMDCDGTLDGYDLELTATVSQAVNIPVIASGGVGKLEHLYEGLTAGRADAVLAASIFHFGTYTIKEAKDYLAARGVPVRL</sequence>
<organism>
    <name type="scientific">Moorella thermoacetica (strain ATCC 39073 / JCM 9320)</name>
    <dbReference type="NCBI Taxonomy" id="264732"/>
    <lineage>
        <taxon>Bacteria</taxon>
        <taxon>Bacillati</taxon>
        <taxon>Bacillota</taxon>
        <taxon>Clostridia</taxon>
        <taxon>Moorellales</taxon>
        <taxon>Moorellaceae</taxon>
        <taxon>Moorella</taxon>
    </lineage>
</organism>
<reference key="1">
    <citation type="journal article" date="2008" name="Environ. Microbiol.">
        <title>The complete genome sequence of Moorella thermoacetica (f. Clostridium thermoaceticum).</title>
        <authorList>
            <person name="Pierce E."/>
            <person name="Xie G."/>
            <person name="Barabote R.D."/>
            <person name="Saunders E."/>
            <person name="Han C.S."/>
            <person name="Detter J.C."/>
            <person name="Richardson P."/>
            <person name="Brettin T.S."/>
            <person name="Das A."/>
            <person name="Ljungdahl L.G."/>
            <person name="Ragsdale S.W."/>
        </authorList>
    </citation>
    <scope>NUCLEOTIDE SEQUENCE [LARGE SCALE GENOMIC DNA]</scope>
    <source>
        <strain>ATCC 39073 / JCM 9320</strain>
    </source>
</reference>
<dbReference type="EC" id="4.3.2.10" evidence="1"/>
<dbReference type="EMBL" id="CP000232">
    <property type="protein sequence ID" value="ABC20327.1"/>
    <property type="molecule type" value="Genomic_DNA"/>
</dbReference>
<dbReference type="RefSeq" id="YP_430870.1">
    <property type="nucleotide sequence ID" value="NC_007644.1"/>
</dbReference>
<dbReference type="SMR" id="Q2RGW2"/>
<dbReference type="STRING" id="264732.Moth_2031"/>
<dbReference type="EnsemblBacteria" id="ABC20327">
    <property type="protein sequence ID" value="ABC20327"/>
    <property type="gene ID" value="Moth_2031"/>
</dbReference>
<dbReference type="KEGG" id="mta:Moth_2031"/>
<dbReference type="PATRIC" id="fig|264732.11.peg.2206"/>
<dbReference type="eggNOG" id="COG0107">
    <property type="taxonomic scope" value="Bacteria"/>
</dbReference>
<dbReference type="HOGENOM" id="CLU_048577_4_0_9"/>
<dbReference type="OrthoDB" id="9781903at2"/>
<dbReference type="UniPathway" id="UPA00031">
    <property type="reaction ID" value="UER00010"/>
</dbReference>
<dbReference type="GO" id="GO:0005737">
    <property type="term" value="C:cytoplasm"/>
    <property type="evidence" value="ECO:0007669"/>
    <property type="project" value="UniProtKB-SubCell"/>
</dbReference>
<dbReference type="GO" id="GO:0000107">
    <property type="term" value="F:imidazoleglycerol-phosphate synthase activity"/>
    <property type="evidence" value="ECO:0007669"/>
    <property type="project" value="UniProtKB-UniRule"/>
</dbReference>
<dbReference type="GO" id="GO:0016829">
    <property type="term" value="F:lyase activity"/>
    <property type="evidence" value="ECO:0007669"/>
    <property type="project" value="UniProtKB-KW"/>
</dbReference>
<dbReference type="GO" id="GO:0000105">
    <property type="term" value="P:L-histidine biosynthetic process"/>
    <property type="evidence" value="ECO:0007669"/>
    <property type="project" value="UniProtKB-UniRule"/>
</dbReference>
<dbReference type="CDD" id="cd04731">
    <property type="entry name" value="HisF"/>
    <property type="match status" value="1"/>
</dbReference>
<dbReference type="FunFam" id="3.20.20.70:FF:000006">
    <property type="entry name" value="Imidazole glycerol phosphate synthase subunit HisF"/>
    <property type="match status" value="1"/>
</dbReference>
<dbReference type="Gene3D" id="3.20.20.70">
    <property type="entry name" value="Aldolase class I"/>
    <property type="match status" value="1"/>
</dbReference>
<dbReference type="HAMAP" id="MF_01013">
    <property type="entry name" value="HisF"/>
    <property type="match status" value="1"/>
</dbReference>
<dbReference type="InterPro" id="IPR013785">
    <property type="entry name" value="Aldolase_TIM"/>
</dbReference>
<dbReference type="InterPro" id="IPR006062">
    <property type="entry name" value="His_biosynth"/>
</dbReference>
<dbReference type="InterPro" id="IPR004651">
    <property type="entry name" value="HisF"/>
</dbReference>
<dbReference type="InterPro" id="IPR050064">
    <property type="entry name" value="IGPS_HisA/HisF"/>
</dbReference>
<dbReference type="InterPro" id="IPR011060">
    <property type="entry name" value="RibuloseP-bd_barrel"/>
</dbReference>
<dbReference type="NCBIfam" id="TIGR00735">
    <property type="entry name" value="hisF"/>
    <property type="match status" value="1"/>
</dbReference>
<dbReference type="PANTHER" id="PTHR21235:SF2">
    <property type="entry name" value="IMIDAZOLE GLYCEROL PHOSPHATE SYNTHASE HISHF"/>
    <property type="match status" value="1"/>
</dbReference>
<dbReference type="PANTHER" id="PTHR21235">
    <property type="entry name" value="IMIDAZOLE GLYCEROL PHOSPHATE SYNTHASE SUBUNIT HISF/H IGP SYNTHASE SUBUNIT HISF/H"/>
    <property type="match status" value="1"/>
</dbReference>
<dbReference type="Pfam" id="PF00977">
    <property type="entry name" value="His_biosynth"/>
    <property type="match status" value="1"/>
</dbReference>
<dbReference type="SUPFAM" id="SSF51366">
    <property type="entry name" value="Ribulose-phoshate binding barrel"/>
    <property type="match status" value="1"/>
</dbReference>
<comment type="function">
    <text evidence="1">IGPS catalyzes the conversion of PRFAR and glutamine to IGP, AICAR and glutamate. The HisF subunit catalyzes the cyclization activity that produces IGP and AICAR from PRFAR using the ammonia provided by the HisH subunit.</text>
</comment>
<comment type="catalytic activity">
    <reaction evidence="1">
        <text>5-[(5-phospho-1-deoxy-D-ribulos-1-ylimino)methylamino]-1-(5-phospho-beta-D-ribosyl)imidazole-4-carboxamide + L-glutamine = D-erythro-1-(imidazol-4-yl)glycerol 3-phosphate + 5-amino-1-(5-phospho-beta-D-ribosyl)imidazole-4-carboxamide + L-glutamate + H(+)</text>
        <dbReference type="Rhea" id="RHEA:24793"/>
        <dbReference type="ChEBI" id="CHEBI:15378"/>
        <dbReference type="ChEBI" id="CHEBI:29985"/>
        <dbReference type="ChEBI" id="CHEBI:58278"/>
        <dbReference type="ChEBI" id="CHEBI:58359"/>
        <dbReference type="ChEBI" id="CHEBI:58475"/>
        <dbReference type="ChEBI" id="CHEBI:58525"/>
        <dbReference type="EC" id="4.3.2.10"/>
    </reaction>
</comment>
<comment type="pathway">
    <text evidence="1">Amino-acid biosynthesis; L-histidine biosynthesis; L-histidine from 5-phospho-alpha-D-ribose 1-diphosphate: step 5/9.</text>
</comment>
<comment type="subunit">
    <text evidence="1">Heterodimer of HisH and HisF.</text>
</comment>
<comment type="subcellular location">
    <subcellularLocation>
        <location evidence="1">Cytoplasm</location>
    </subcellularLocation>
</comment>
<comment type="similarity">
    <text evidence="1">Belongs to the HisA/HisF family.</text>
</comment>
<proteinExistence type="inferred from homology"/>
<name>HIS6_MOOTA</name>
<keyword id="KW-0028">Amino-acid biosynthesis</keyword>
<keyword id="KW-0963">Cytoplasm</keyword>
<keyword id="KW-0368">Histidine biosynthesis</keyword>
<keyword id="KW-0456">Lyase</keyword>
<feature type="chain" id="PRO_0000230129" description="Imidazole glycerol phosphate synthase subunit HisF">
    <location>
        <begin position="1"/>
        <end position="252"/>
    </location>
</feature>
<feature type="active site" evidence="1">
    <location>
        <position position="11"/>
    </location>
</feature>
<feature type="active site" evidence="1">
    <location>
        <position position="130"/>
    </location>
</feature>